<proteinExistence type="inferred from homology"/>
<name>RK1_PHATC</name>
<keyword id="KW-0150">Chloroplast</keyword>
<keyword id="KW-0934">Plastid</keyword>
<keyword id="KW-1185">Reference proteome</keyword>
<keyword id="KW-0687">Ribonucleoprotein</keyword>
<keyword id="KW-0689">Ribosomal protein</keyword>
<keyword id="KW-0694">RNA-binding</keyword>
<keyword id="KW-0699">rRNA-binding</keyword>
<gene>
    <name type="primary">rpl1</name>
</gene>
<comment type="function">
    <text evidence="2">Binds directly to 23S rRNA. Might be involved in E site tRNA release (Potential).</text>
</comment>
<comment type="subunit">
    <text evidence="1">Part of the 50S ribosomal subunit.</text>
</comment>
<comment type="subcellular location">
    <subcellularLocation>
        <location>Plastid</location>
        <location>Chloroplast</location>
    </subcellularLocation>
</comment>
<comment type="similarity">
    <text evidence="2">Belongs to the universal ribosomal protein uL1 family.</text>
</comment>
<evidence type="ECO:0000250" key="1"/>
<evidence type="ECO:0000305" key="2"/>
<geneLocation type="chloroplast"/>
<dbReference type="EMBL" id="EF067920">
    <property type="protein sequence ID" value="ABK20619.1"/>
    <property type="molecule type" value="Genomic_DNA"/>
</dbReference>
<dbReference type="RefSeq" id="YP_874396.1">
    <property type="nucleotide sequence ID" value="NC_008588.1"/>
</dbReference>
<dbReference type="SMR" id="A0T0C1"/>
<dbReference type="FunCoup" id="A0T0C1">
    <property type="interactions" value="124"/>
</dbReference>
<dbReference type="STRING" id="556484.A0T0C1"/>
<dbReference type="GeneID" id="4524711"/>
<dbReference type="InParanoid" id="A0T0C1"/>
<dbReference type="Proteomes" id="UP000000759">
    <property type="component" value="Chloroplast"/>
</dbReference>
<dbReference type="GO" id="GO:0009507">
    <property type="term" value="C:chloroplast"/>
    <property type="evidence" value="ECO:0007669"/>
    <property type="project" value="UniProtKB-SubCell"/>
</dbReference>
<dbReference type="GO" id="GO:0015934">
    <property type="term" value="C:large ribosomal subunit"/>
    <property type="evidence" value="ECO:0007669"/>
    <property type="project" value="InterPro"/>
</dbReference>
<dbReference type="GO" id="GO:0019843">
    <property type="term" value="F:rRNA binding"/>
    <property type="evidence" value="ECO:0007669"/>
    <property type="project" value="UniProtKB-UniRule"/>
</dbReference>
<dbReference type="GO" id="GO:0003735">
    <property type="term" value="F:structural constituent of ribosome"/>
    <property type="evidence" value="ECO:0007669"/>
    <property type="project" value="InterPro"/>
</dbReference>
<dbReference type="GO" id="GO:0006412">
    <property type="term" value="P:translation"/>
    <property type="evidence" value="ECO:0007669"/>
    <property type="project" value="UniProtKB-UniRule"/>
</dbReference>
<dbReference type="CDD" id="cd00403">
    <property type="entry name" value="Ribosomal_L1"/>
    <property type="match status" value="1"/>
</dbReference>
<dbReference type="FunFam" id="3.40.50.790:FF:000001">
    <property type="entry name" value="50S ribosomal protein L1"/>
    <property type="match status" value="1"/>
</dbReference>
<dbReference type="Gene3D" id="3.30.190.20">
    <property type="match status" value="1"/>
</dbReference>
<dbReference type="Gene3D" id="3.40.50.790">
    <property type="match status" value="1"/>
</dbReference>
<dbReference type="HAMAP" id="MF_01318_B">
    <property type="entry name" value="Ribosomal_uL1_B"/>
    <property type="match status" value="1"/>
</dbReference>
<dbReference type="InterPro" id="IPR005878">
    <property type="entry name" value="Ribosom_uL1_bac-type"/>
</dbReference>
<dbReference type="InterPro" id="IPR002143">
    <property type="entry name" value="Ribosomal_uL1"/>
</dbReference>
<dbReference type="InterPro" id="IPR023674">
    <property type="entry name" value="Ribosomal_uL1-like"/>
</dbReference>
<dbReference type="InterPro" id="IPR028364">
    <property type="entry name" value="Ribosomal_uL1/biogenesis"/>
</dbReference>
<dbReference type="InterPro" id="IPR016095">
    <property type="entry name" value="Ribosomal_uL1_3-a/b-sand"/>
</dbReference>
<dbReference type="InterPro" id="IPR023673">
    <property type="entry name" value="Ribosomal_uL1_CS"/>
</dbReference>
<dbReference type="NCBIfam" id="TIGR01169">
    <property type="entry name" value="rplA_bact"/>
    <property type="match status" value="1"/>
</dbReference>
<dbReference type="PANTHER" id="PTHR36427">
    <property type="entry name" value="54S RIBOSOMAL PROTEIN L1, MITOCHONDRIAL"/>
    <property type="match status" value="1"/>
</dbReference>
<dbReference type="PANTHER" id="PTHR36427:SF3">
    <property type="entry name" value="LARGE RIBOSOMAL SUBUNIT PROTEIN UL1M"/>
    <property type="match status" value="1"/>
</dbReference>
<dbReference type="Pfam" id="PF00687">
    <property type="entry name" value="Ribosomal_L1"/>
    <property type="match status" value="1"/>
</dbReference>
<dbReference type="PIRSF" id="PIRSF002155">
    <property type="entry name" value="Ribosomal_L1"/>
    <property type="match status" value="1"/>
</dbReference>
<dbReference type="SUPFAM" id="SSF56808">
    <property type="entry name" value="Ribosomal protein L1"/>
    <property type="match status" value="1"/>
</dbReference>
<dbReference type="PROSITE" id="PS01199">
    <property type="entry name" value="RIBOSOMAL_L1"/>
    <property type="match status" value="1"/>
</dbReference>
<organism>
    <name type="scientific">Phaeodactylum tricornutum (strain CCAP 1055/1)</name>
    <dbReference type="NCBI Taxonomy" id="556484"/>
    <lineage>
        <taxon>Eukaryota</taxon>
        <taxon>Sar</taxon>
        <taxon>Stramenopiles</taxon>
        <taxon>Ochrophyta</taxon>
        <taxon>Bacillariophyta</taxon>
        <taxon>Bacillariophyceae</taxon>
        <taxon>Bacillariophycidae</taxon>
        <taxon>Naviculales</taxon>
        <taxon>Phaeodactylaceae</taxon>
        <taxon>Phaeodactylum</taxon>
    </lineage>
</organism>
<feature type="chain" id="PRO_0000276399" description="Large ribosomal subunit protein uL1c">
    <location>
        <begin position="1"/>
        <end position="230"/>
    </location>
</feature>
<sequence length="230" mass="25427">MQKVSRRHKENFERTKNIVYSNIDEAIAVLKETATTKFVESVELHANLNIDPKYADQQLRTTVTLPNGIGKQVVIAVLTNEENFEEAKSSGGDIVGNDELIAQITQGQINFDLLIATPNMMPKLAKLGRMLGPKGLMPSPKSGTVTSTLQSTLTEFKKGKFEYKADKTGIVHVNFGKSNFTNEQLVENLKALYQSIEQNRPSGVKGKYFKSVSICTTMGPSVKLDLEIFA</sequence>
<reference key="1">
    <citation type="journal article" date="2007" name="Mol. Genet. Genomics">
        <title>Chloroplast genomes of the diatoms Phaeodactylum tricornutum and Thalassiosira pseudonana: comparison with other plastid genomes of the red lineage.</title>
        <authorList>
            <person name="Oudot-Le Secq M.-P."/>
            <person name="Grimwood J."/>
            <person name="Shapiro H."/>
            <person name="Armbrust E.V."/>
            <person name="Bowler C."/>
            <person name="Green B.R."/>
        </authorList>
    </citation>
    <scope>NUCLEOTIDE SEQUENCE [LARGE SCALE GENOMIC DNA]</scope>
    <source>
        <strain>CCAP 1055/1</strain>
    </source>
</reference>
<accession>A0T0C1</accession>
<protein>
    <recommendedName>
        <fullName evidence="2">Large ribosomal subunit protein uL1c</fullName>
    </recommendedName>
    <alternativeName>
        <fullName>50S ribosomal protein L1, chloroplastic</fullName>
    </alternativeName>
</protein>